<protein>
    <recommendedName>
        <fullName>Unknown protein 2</fullName>
    </recommendedName>
</protein>
<name>UP02_DAUCA</name>
<feature type="chain" id="PRO_0000355607" description="Unknown protein 2">
    <location>
        <begin position="1" status="less than"/>
        <end position="10" status="greater than"/>
    </location>
</feature>
<feature type="unsure residue" description="L or I">
    <location>
        <position position="3"/>
    </location>
</feature>
<feature type="unsure residue" description="F or M">
    <location>
        <position position="5"/>
    </location>
</feature>
<feature type="non-terminal residue">
    <location>
        <position position="1"/>
    </location>
</feature>
<feature type="non-terminal residue">
    <location>
        <position position="10"/>
    </location>
</feature>
<accession>P86060</accession>
<reference evidence="1" key="1">
    <citation type="submission" date="2008-07" db="UniProtKB">
        <authorList>
            <person name="Almagro L."/>
            <person name="Ferrer M.A."/>
            <person name="Bru R."/>
            <person name="Pedreno M.A."/>
        </authorList>
    </citation>
    <scope>PROTEIN SEQUENCE</scope>
</reference>
<organism>
    <name type="scientific">Daucus carota</name>
    <name type="common">Wild carrot</name>
    <dbReference type="NCBI Taxonomy" id="4039"/>
    <lineage>
        <taxon>Eukaryota</taxon>
        <taxon>Viridiplantae</taxon>
        <taxon>Streptophyta</taxon>
        <taxon>Embryophyta</taxon>
        <taxon>Tracheophyta</taxon>
        <taxon>Spermatophyta</taxon>
        <taxon>Magnoliopsida</taxon>
        <taxon>eudicotyledons</taxon>
        <taxon>Gunneridae</taxon>
        <taxon>Pentapetalae</taxon>
        <taxon>asterids</taxon>
        <taxon>campanulids</taxon>
        <taxon>Apiales</taxon>
        <taxon>Apiaceae</taxon>
        <taxon>Apioideae</taxon>
        <taxon>Scandiceae</taxon>
        <taxon>Daucinae</taxon>
        <taxon>Daucus</taxon>
        <taxon>Daucus sect. Daucus</taxon>
    </lineage>
</organism>
<proteinExistence type="evidence at protein level"/>
<evidence type="ECO:0000305" key="1"/>
<sequence length="10" mass="1178">VGLVFNPYNR</sequence>
<keyword id="KW-0903">Direct protein sequencing</keyword>